<organism>
    <name type="scientific">Arabidopsis thaliana</name>
    <name type="common">Mouse-ear cress</name>
    <dbReference type="NCBI Taxonomy" id="3702"/>
    <lineage>
        <taxon>Eukaryota</taxon>
        <taxon>Viridiplantae</taxon>
        <taxon>Streptophyta</taxon>
        <taxon>Embryophyta</taxon>
        <taxon>Tracheophyta</taxon>
        <taxon>Spermatophyta</taxon>
        <taxon>Magnoliopsida</taxon>
        <taxon>eudicotyledons</taxon>
        <taxon>Gunneridae</taxon>
        <taxon>Pentapetalae</taxon>
        <taxon>rosids</taxon>
        <taxon>malvids</taxon>
        <taxon>Brassicales</taxon>
        <taxon>Brassicaceae</taxon>
        <taxon>Camelineae</taxon>
        <taxon>Arabidopsis</taxon>
    </lineage>
</organism>
<proteinExistence type="evidence at transcript level"/>
<dbReference type="EC" id="3.1.1.11"/>
<dbReference type="EMBL" id="AC002505">
    <property type="protein sequence ID" value="AAC14494.1"/>
    <property type="status" value="ALT_INIT"/>
    <property type="molecule type" value="Genomic_DNA"/>
</dbReference>
<dbReference type="EMBL" id="CP002685">
    <property type="protein sequence ID" value="AEC07840.1"/>
    <property type="molecule type" value="Genomic_DNA"/>
</dbReference>
<dbReference type="EMBL" id="BT008681">
    <property type="protein sequence ID" value="AAP40488.1"/>
    <property type="molecule type" value="mRNA"/>
</dbReference>
<dbReference type="EMBL" id="AK229600">
    <property type="protein sequence ID" value="BAF01447.1"/>
    <property type="molecule type" value="mRNA"/>
</dbReference>
<dbReference type="PIR" id="T00978">
    <property type="entry name" value="T00978"/>
</dbReference>
<dbReference type="RefSeq" id="NP_850077.1">
    <property type="nucleotide sequence ID" value="NM_179746.2"/>
</dbReference>
<dbReference type="SMR" id="Q7Y201"/>
<dbReference type="FunCoup" id="Q7Y201">
    <property type="interactions" value="84"/>
</dbReference>
<dbReference type="STRING" id="3702.Q7Y201"/>
<dbReference type="GlyCosmos" id="Q7Y201">
    <property type="glycosylation" value="9 sites, No reported glycans"/>
</dbReference>
<dbReference type="GlyGen" id="Q7Y201">
    <property type="glycosylation" value="10 sites"/>
</dbReference>
<dbReference type="PaxDb" id="3702-AT2G26450.1"/>
<dbReference type="ProteomicsDB" id="236641"/>
<dbReference type="EnsemblPlants" id="AT2G26450.1">
    <property type="protein sequence ID" value="AT2G26450.1"/>
    <property type="gene ID" value="AT2G26450"/>
</dbReference>
<dbReference type="GeneID" id="817185"/>
<dbReference type="Gramene" id="AT2G26450.1">
    <property type="protein sequence ID" value="AT2G26450.1"/>
    <property type="gene ID" value="AT2G26450"/>
</dbReference>
<dbReference type="KEGG" id="ath:AT2G26450"/>
<dbReference type="Araport" id="AT2G26450"/>
<dbReference type="TAIR" id="AT2G26450"/>
<dbReference type="eggNOG" id="ENOG502QSQ4">
    <property type="taxonomic scope" value="Eukaryota"/>
</dbReference>
<dbReference type="HOGENOM" id="CLU_012243_9_1_1"/>
<dbReference type="InParanoid" id="Q7Y201"/>
<dbReference type="OMA" id="VHNCKIA"/>
<dbReference type="BioCyc" id="ARA:AT2G26450-MONOMER"/>
<dbReference type="UniPathway" id="UPA00545">
    <property type="reaction ID" value="UER00823"/>
</dbReference>
<dbReference type="PRO" id="PR:Q7Y201"/>
<dbReference type="Proteomes" id="UP000006548">
    <property type="component" value="Chromosome 2"/>
</dbReference>
<dbReference type="ExpressionAtlas" id="Q7Y201">
    <property type="expression patterns" value="baseline and differential"/>
</dbReference>
<dbReference type="GO" id="GO:0016020">
    <property type="term" value="C:membrane"/>
    <property type="evidence" value="ECO:0007669"/>
    <property type="project" value="UniProtKB-SubCell"/>
</dbReference>
<dbReference type="GO" id="GO:0004857">
    <property type="term" value="F:enzyme inhibitor activity"/>
    <property type="evidence" value="ECO:0007669"/>
    <property type="project" value="InterPro"/>
</dbReference>
<dbReference type="GO" id="GO:0030599">
    <property type="term" value="F:pectinesterase activity"/>
    <property type="evidence" value="ECO:0007669"/>
    <property type="project" value="UniProtKB-EC"/>
</dbReference>
<dbReference type="GO" id="GO:0042545">
    <property type="term" value="P:cell wall modification"/>
    <property type="evidence" value="ECO:0007669"/>
    <property type="project" value="InterPro"/>
</dbReference>
<dbReference type="GO" id="GO:0045490">
    <property type="term" value="P:pectin catabolic process"/>
    <property type="evidence" value="ECO:0007669"/>
    <property type="project" value="UniProtKB-UniPathway"/>
</dbReference>
<dbReference type="CDD" id="cd15798">
    <property type="entry name" value="PMEI-like_3"/>
    <property type="match status" value="1"/>
</dbReference>
<dbReference type="FunFam" id="1.20.140.40:FF:000001">
    <property type="entry name" value="Pectinesterase"/>
    <property type="match status" value="1"/>
</dbReference>
<dbReference type="FunFam" id="2.160.20.10:FF:000001">
    <property type="entry name" value="Pectinesterase"/>
    <property type="match status" value="1"/>
</dbReference>
<dbReference type="Gene3D" id="1.20.140.40">
    <property type="entry name" value="Invertase/pectin methylesterase inhibitor family protein"/>
    <property type="match status" value="1"/>
</dbReference>
<dbReference type="Gene3D" id="2.160.20.10">
    <property type="entry name" value="Single-stranded right-handed beta-helix, Pectin lyase-like"/>
    <property type="match status" value="1"/>
</dbReference>
<dbReference type="InterPro" id="IPR035513">
    <property type="entry name" value="Invertase/methylesterase_inhib"/>
</dbReference>
<dbReference type="InterPro" id="IPR012334">
    <property type="entry name" value="Pectin_lyas_fold"/>
</dbReference>
<dbReference type="InterPro" id="IPR011050">
    <property type="entry name" value="Pectin_lyase_fold/virulence"/>
</dbReference>
<dbReference type="InterPro" id="IPR033131">
    <property type="entry name" value="Pectinesterase_Asp_AS"/>
</dbReference>
<dbReference type="InterPro" id="IPR000070">
    <property type="entry name" value="Pectinesterase_cat"/>
</dbReference>
<dbReference type="InterPro" id="IPR006501">
    <property type="entry name" value="Pectinesterase_inhib_dom"/>
</dbReference>
<dbReference type="NCBIfam" id="TIGR01614">
    <property type="entry name" value="PME_inhib"/>
    <property type="match status" value="1"/>
</dbReference>
<dbReference type="PANTHER" id="PTHR31707">
    <property type="entry name" value="PECTINESTERASE"/>
    <property type="match status" value="1"/>
</dbReference>
<dbReference type="Pfam" id="PF01095">
    <property type="entry name" value="Pectinesterase"/>
    <property type="match status" value="1"/>
</dbReference>
<dbReference type="Pfam" id="PF04043">
    <property type="entry name" value="PMEI"/>
    <property type="match status" value="1"/>
</dbReference>
<dbReference type="SMART" id="SM00856">
    <property type="entry name" value="PMEI"/>
    <property type="match status" value="1"/>
</dbReference>
<dbReference type="SUPFAM" id="SSF51126">
    <property type="entry name" value="Pectin lyase-like"/>
    <property type="match status" value="1"/>
</dbReference>
<dbReference type="SUPFAM" id="SSF101148">
    <property type="entry name" value="Plant invertase/pectin methylesterase inhibitor"/>
    <property type="match status" value="1"/>
</dbReference>
<dbReference type="PROSITE" id="PS00503">
    <property type="entry name" value="PECTINESTERASE_2"/>
    <property type="match status" value="1"/>
</dbReference>
<protein>
    <recommendedName>
        <fullName>Probable pectinesterase/pectinesterase inhibitor 13</fullName>
    </recommendedName>
    <domain>
        <recommendedName>
            <fullName>Pectinesterase inhibitor 13</fullName>
        </recommendedName>
        <alternativeName>
            <fullName>Pectin methylesterase inhibitor 13</fullName>
        </alternativeName>
    </domain>
    <domain>
        <recommendedName>
            <fullName>Pectinesterase 13</fullName>
            <shortName>PE 13</shortName>
            <ecNumber>3.1.1.11</ecNumber>
        </recommendedName>
        <alternativeName>
            <fullName>Pectin methylesterase 13</fullName>
            <shortName>AtPME13</shortName>
        </alternativeName>
    </domain>
</protein>
<evidence type="ECO:0000250" key="1"/>
<evidence type="ECO:0000255" key="2"/>
<evidence type="ECO:0000255" key="3">
    <source>
        <dbReference type="PROSITE-ProRule" id="PRU10040"/>
    </source>
</evidence>
<evidence type="ECO:0000256" key="4">
    <source>
        <dbReference type="SAM" id="MobiDB-lite"/>
    </source>
</evidence>
<evidence type="ECO:0000269" key="5">
    <source>
    </source>
</evidence>
<evidence type="ECO:0000305" key="6"/>
<name>PME13_ARATH</name>
<feature type="chain" id="PRO_0000371670" description="Probable pectinesterase/pectinesterase inhibitor 13">
    <location>
        <begin position="1"/>
        <end position="614"/>
    </location>
</feature>
<feature type="transmembrane region" description="Helical" evidence="2">
    <location>
        <begin position="25"/>
        <end position="45"/>
    </location>
</feature>
<feature type="region of interest" description="Disordered" evidence="4">
    <location>
        <begin position="55"/>
        <end position="102"/>
    </location>
</feature>
<feature type="region of interest" description="Pectinesterase inhibitor 13">
    <location>
        <begin position="103"/>
        <end position="255"/>
    </location>
</feature>
<feature type="region of interest" description="Pectinesterase 13">
    <location>
        <begin position="301"/>
        <end position="598"/>
    </location>
</feature>
<feature type="active site" description="Proton donor; for pectinesterase activity" evidence="3">
    <location>
        <position position="429"/>
    </location>
</feature>
<feature type="active site" description="Nucleophile; for pectinesterase activity" evidence="3">
    <location>
        <position position="450"/>
    </location>
</feature>
<feature type="binding site" evidence="1">
    <location>
        <position position="376"/>
    </location>
    <ligand>
        <name>substrate</name>
        <note>for pectinesterase activity</note>
    </ligand>
</feature>
<feature type="binding site" evidence="1">
    <location>
        <position position="406"/>
    </location>
    <ligand>
        <name>substrate</name>
        <note>for pectinesterase activity</note>
    </ligand>
</feature>
<feature type="binding site" evidence="1">
    <location>
        <position position="518"/>
    </location>
    <ligand>
        <name>substrate</name>
        <note>for pectinesterase activity</note>
    </ligand>
</feature>
<feature type="binding site" evidence="1">
    <location>
        <position position="520"/>
    </location>
    <ligand>
        <name>substrate</name>
        <note>for pectinesterase activity</note>
    </ligand>
</feature>
<feature type="site" description="Transition state stabilizer" evidence="1">
    <location>
        <position position="428"/>
    </location>
</feature>
<feature type="glycosylation site" description="N-linked (GlcNAc...) asparagine" evidence="2">
    <location>
        <position position="66"/>
    </location>
</feature>
<feature type="glycosylation site" description="N-linked (GlcNAc...) asparagine" evidence="2">
    <location>
        <position position="128"/>
    </location>
</feature>
<feature type="glycosylation site" description="N-linked (GlcNAc...) asparagine" evidence="2">
    <location>
        <position position="197"/>
    </location>
</feature>
<feature type="glycosylation site" description="N-linked (GlcNAc...) asparagine" evidence="2">
    <location>
        <position position="243"/>
    </location>
</feature>
<feature type="glycosylation site" description="N-linked (GlcNAc...) asparagine" evidence="2">
    <location>
        <position position="301"/>
    </location>
</feature>
<feature type="glycosylation site" description="N-linked (GlcNAc...) asparagine" evidence="2">
    <location>
        <position position="351"/>
    </location>
</feature>
<feature type="glycosylation site" description="N-linked (GlcNAc...) asparagine" evidence="2">
    <location>
        <position position="367"/>
    </location>
</feature>
<feature type="glycosylation site" description="N-linked (GlcNAc...) asparagine" evidence="2">
    <location>
        <position position="522"/>
    </location>
</feature>
<feature type="glycosylation site" description="N-linked (GlcNAc...) asparagine" evidence="2">
    <location>
        <position position="588"/>
    </location>
</feature>
<feature type="disulfide bond" evidence="1">
    <location>
        <begin position="443"/>
        <end position="463"/>
    </location>
</feature>
<feature type="sequence conflict" description="In Ref. 3; AAP40488 and 4; BAF01447." evidence="6" ref="3 4">
    <original>D</original>
    <variation>G</variation>
    <location>
        <position position="277"/>
    </location>
</feature>
<feature type="sequence conflict" description="In Ref. 3; AAP40488 and 4; BAF01447." evidence="6" ref="3 4">
    <original>P</original>
    <variation>S</variation>
    <location>
        <position position="402"/>
    </location>
</feature>
<comment type="function">
    <text evidence="1">Acts in the modification of cell walls via demethylesterification of cell wall pectin.</text>
</comment>
<comment type="catalytic activity">
    <reaction>
        <text>[(1-&gt;4)-alpha-D-galacturonosyl methyl ester](n) + n H2O = [(1-&gt;4)-alpha-D-galacturonosyl](n) + n methanol + n H(+)</text>
        <dbReference type="Rhea" id="RHEA:22380"/>
        <dbReference type="Rhea" id="RHEA-COMP:14570"/>
        <dbReference type="Rhea" id="RHEA-COMP:14573"/>
        <dbReference type="ChEBI" id="CHEBI:15377"/>
        <dbReference type="ChEBI" id="CHEBI:15378"/>
        <dbReference type="ChEBI" id="CHEBI:17790"/>
        <dbReference type="ChEBI" id="CHEBI:140522"/>
        <dbReference type="ChEBI" id="CHEBI:140523"/>
        <dbReference type="EC" id="3.1.1.11"/>
    </reaction>
</comment>
<comment type="pathway">
    <text>Glycan metabolism; pectin degradation; 2-dehydro-3-deoxy-D-gluconate from pectin: step 1/5.</text>
</comment>
<comment type="subcellular location">
    <subcellularLocation>
        <location evidence="6">Membrane</location>
        <topology evidence="6">Single-pass membrane protein</topology>
    </subcellularLocation>
</comment>
<comment type="tissue specificity">
    <text evidence="5">Expressed in flower buds.</text>
</comment>
<comment type="miscellaneous">
    <text>The PMEI region may act as an autoinhibitory domain and prevent untimely PME activity during transport.</text>
</comment>
<comment type="similarity">
    <text evidence="6">In the N-terminal section; belongs to the PMEI family.</text>
</comment>
<comment type="similarity">
    <text evidence="6">In the C-terminal section; belongs to the pectinesterase family.</text>
</comment>
<comment type="sequence caution" evidence="6">
    <conflict type="erroneous initiation">
        <sequence resource="EMBL-CDS" id="AAC14494"/>
    </conflict>
</comment>
<accession>Q7Y201</accession>
<accession>O48712</accession>
<sequence>MAFQDFDKIQERVNANRKRKFRKRIIVGTVSLLVVVAAIVGGAFAYVAYEKRNEQQQQQQQAKNHNKSGSGNNVVKDSDKKSPSPPTPSQKAPVSAAQSVKPGQGDKIIQTLCSSTLYMQICEKTLKNRTDKGFALDNPTTFLKSAIEAVNEDLDLVLEKVLSLKTENQDDKDAIEQCKLLVEDAKEETVASLNKINVTEVNSFEKVVPDLESWLSAVMSYQETCLDGFEEGNLKSEVKTSVNSSQVLTSNSLALIKTFTENLSPVMKVVERHLLDDIPSWVSNDDRRMLRAVDVKALKPNATVAKDGSGDFTTINDALRAMPEKYEGRYIIYVKQGIYDEYVTVDKKKANLTMVGDGSQKTIVTGNKSHAKKIRTFLTATFVAQGEGFMAQSMGFRNTAGPEGHQAVAIRVQSDRSIFLNCRFEGYQDTLYAYTHRQYYRSCVIVGTIDFIFGDAAAIFQNCNIFIRKGLPGQKNTVTAQGRVDKFQTTGFVVHNCKIAANEDLKPVKEEYKSYLGRPWKNYSRTIIMESKIENVIDPVGWLRWQETDFAIDTLYYAEYNNKGSSGDTTSRVKWPGFKVINKEEALNYTVGPFLQGDWISASGSPVKLGLYDA</sequence>
<reference key="1">
    <citation type="journal article" date="1999" name="Nature">
        <title>Sequence and analysis of chromosome 2 of the plant Arabidopsis thaliana.</title>
        <authorList>
            <person name="Lin X."/>
            <person name="Kaul S."/>
            <person name="Rounsley S.D."/>
            <person name="Shea T.P."/>
            <person name="Benito M.-I."/>
            <person name="Town C.D."/>
            <person name="Fujii C.Y."/>
            <person name="Mason T.M."/>
            <person name="Bowman C.L."/>
            <person name="Barnstead M.E."/>
            <person name="Feldblyum T.V."/>
            <person name="Buell C.R."/>
            <person name="Ketchum K.A."/>
            <person name="Lee J.J."/>
            <person name="Ronning C.M."/>
            <person name="Koo H.L."/>
            <person name="Moffat K.S."/>
            <person name="Cronin L.A."/>
            <person name="Shen M."/>
            <person name="Pai G."/>
            <person name="Van Aken S."/>
            <person name="Umayam L."/>
            <person name="Tallon L.J."/>
            <person name="Gill J.E."/>
            <person name="Adams M.D."/>
            <person name="Carrera A.J."/>
            <person name="Creasy T.H."/>
            <person name="Goodman H.M."/>
            <person name="Somerville C.R."/>
            <person name="Copenhaver G.P."/>
            <person name="Preuss D."/>
            <person name="Nierman W.C."/>
            <person name="White O."/>
            <person name="Eisen J.A."/>
            <person name="Salzberg S.L."/>
            <person name="Fraser C.M."/>
            <person name="Venter J.C."/>
        </authorList>
    </citation>
    <scope>NUCLEOTIDE SEQUENCE [LARGE SCALE GENOMIC DNA]</scope>
    <source>
        <strain>cv. Columbia</strain>
    </source>
</reference>
<reference key="2">
    <citation type="journal article" date="2017" name="Plant J.">
        <title>Araport11: a complete reannotation of the Arabidopsis thaliana reference genome.</title>
        <authorList>
            <person name="Cheng C.Y."/>
            <person name="Krishnakumar V."/>
            <person name="Chan A.P."/>
            <person name="Thibaud-Nissen F."/>
            <person name="Schobel S."/>
            <person name="Town C.D."/>
        </authorList>
    </citation>
    <scope>GENOME REANNOTATION</scope>
    <source>
        <strain>cv. Columbia</strain>
    </source>
</reference>
<reference key="3">
    <citation type="journal article" date="2003" name="Science">
        <title>Empirical analysis of transcriptional activity in the Arabidopsis genome.</title>
        <authorList>
            <person name="Yamada K."/>
            <person name="Lim J."/>
            <person name="Dale J.M."/>
            <person name="Chen H."/>
            <person name="Shinn P."/>
            <person name="Palm C.J."/>
            <person name="Southwick A.M."/>
            <person name="Wu H.C."/>
            <person name="Kim C.J."/>
            <person name="Nguyen M."/>
            <person name="Pham P.K."/>
            <person name="Cheuk R.F."/>
            <person name="Karlin-Newmann G."/>
            <person name="Liu S.X."/>
            <person name="Lam B."/>
            <person name="Sakano H."/>
            <person name="Wu T."/>
            <person name="Yu G."/>
            <person name="Miranda M."/>
            <person name="Quach H.L."/>
            <person name="Tripp M."/>
            <person name="Chang C.H."/>
            <person name="Lee J.M."/>
            <person name="Toriumi M.J."/>
            <person name="Chan M.M."/>
            <person name="Tang C.C."/>
            <person name="Onodera C.S."/>
            <person name="Deng J.M."/>
            <person name="Akiyama K."/>
            <person name="Ansari Y."/>
            <person name="Arakawa T."/>
            <person name="Banh J."/>
            <person name="Banno F."/>
            <person name="Bowser L."/>
            <person name="Brooks S.Y."/>
            <person name="Carninci P."/>
            <person name="Chao Q."/>
            <person name="Choy N."/>
            <person name="Enju A."/>
            <person name="Goldsmith A.D."/>
            <person name="Gurjal M."/>
            <person name="Hansen N.F."/>
            <person name="Hayashizaki Y."/>
            <person name="Johnson-Hopson C."/>
            <person name="Hsuan V.W."/>
            <person name="Iida K."/>
            <person name="Karnes M."/>
            <person name="Khan S."/>
            <person name="Koesema E."/>
            <person name="Ishida J."/>
            <person name="Jiang P.X."/>
            <person name="Jones T."/>
            <person name="Kawai J."/>
            <person name="Kamiya A."/>
            <person name="Meyers C."/>
            <person name="Nakajima M."/>
            <person name="Narusaka M."/>
            <person name="Seki M."/>
            <person name="Sakurai T."/>
            <person name="Satou M."/>
            <person name="Tamse R."/>
            <person name="Vaysberg M."/>
            <person name="Wallender E.K."/>
            <person name="Wong C."/>
            <person name="Yamamura Y."/>
            <person name="Yuan S."/>
            <person name="Shinozaki K."/>
            <person name="Davis R.W."/>
            <person name="Theologis A."/>
            <person name="Ecker J.R."/>
        </authorList>
    </citation>
    <scope>NUCLEOTIDE SEQUENCE [LARGE SCALE MRNA]</scope>
    <source>
        <strain>cv. Columbia</strain>
    </source>
</reference>
<reference key="4">
    <citation type="submission" date="2006-07" db="EMBL/GenBank/DDBJ databases">
        <title>Large-scale analysis of RIKEN Arabidopsis full-length (RAFL) cDNAs.</title>
        <authorList>
            <person name="Totoki Y."/>
            <person name="Seki M."/>
            <person name="Ishida J."/>
            <person name="Nakajima M."/>
            <person name="Enju A."/>
            <person name="Kamiya A."/>
            <person name="Narusaka M."/>
            <person name="Shin-i T."/>
            <person name="Nakagawa M."/>
            <person name="Sakamoto N."/>
            <person name="Oishi K."/>
            <person name="Kohara Y."/>
            <person name="Kobayashi M."/>
            <person name="Toyoda A."/>
            <person name="Sakaki Y."/>
            <person name="Sakurai T."/>
            <person name="Iida K."/>
            <person name="Akiyama K."/>
            <person name="Satou M."/>
            <person name="Toyoda T."/>
            <person name="Konagaya A."/>
            <person name="Carninci P."/>
            <person name="Kawai J."/>
            <person name="Hayashizaki Y."/>
            <person name="Shinozaki K."/>
        </authorList>
    </citation>
    <scope>NUCLEOTIDE SEQUENCE [LARGE SCALE MRNA]</scope>
    <source>
        <strain>cv. Columbia</strain>
    </source>
</reference>
<reference key="5">
    <citation type="journal article" date="2004" name="Carbohydr. Res.">
        <title>Pectin methylesterases: sequence-structural features and phylogenetic relationships.</title>
        <authorList>
            <person name="Markovic O."/>
            <person name="Janecek S."/>
        </authorList>
    </citation>
    <scope>GENE FAMILY</scope>
    <scope>NOMENCLATURE</scope>
</reference>
<reference key="6">
    <citation type="journal article" date="2006" name="Planta">
        <title>Comprehensive expression profiling of the pectin methylesterase gene family during silique development in Arabidopsis thaliana.</title>
        <authorList>
            <person name="Louvet R."/>
            <person name="Cavel E."/>
            <person name="Gutierrez L."/>
            <person name="Guenin S."/>
            <person name="Roger D."/>
            <person name="Gillet F."/>
            <person name="Guerineau F."/>
            <person name="Pelloux J."/>
        </authorList>
    </citation>
    <scope>TISSUE SPECIFICITY</scope>
    <scope>DEVELOPMENTAL STAGE</scope>
</reference>
<gene>
    <name type="primary">PME13</name>
    <name type="synonym">ARATH13</name>
    <name type="ordered locus">At2g26450</name>
    <name type="ORF">T9J22.12</name>
</gene>
<keyword id="KW-0063">Aspartyl esterase</keyword>
<keyword id="KW-1015">Disulfide bond</keyword>
<keyword id="KW-0325">Glycoprotein</keyword>
<keyword id="KW-0378">Hydrolase</keyword>
<keyword id="KW-0472">Membrane</keyword>
<keyword id="KW-1185">Reference proteome</keyword>
<keyword id="KW-0812">Transmembrane</keyword>
<keyword id="KW-1133">Transmembrane helix</keyword>